<evidence type="ECO:0000255" key="1"/>
<evidence type="ECO:0000269" key="2">
    <source>
    </source>
</evidence>
<evidence type="ECO:0000269" key="3">
    <source>
    </source>
</evidence>
<evidence type="ECO:0000269" key="4">
    <source>
    </source>
</evidence>
<evidence type="ECO:0000269" key="5">
    <source>
    </source>
</evidence>
<evidence type="ECO:0000269" key="6">
    <source>
    </source>
</evidence>
<evidence type="ECO:0000269" key="7">
    <source>
    </source>
</evidence>
<evidence type="ECO:0000312" key="8">
    <source>
        <dbReference type="PomBase" id="SPBC36B7.06c"/>
    </source>
</evidence>
<keyword id="KW-0158">Chromosome</keyword>
<keyword id="KW-0175">Coiled coil</keyword>
<keyword id="KW-0963">Cytoplasm</keyword>
<keyword id="KW-0469">Meiosis</keyword>
<keyword id="KW-0539">Nucleus</keyword>
<keyword id="KW-1185">Reference proteome</keyword>
<name>MUG20_SCHPO</name>
<accession>Q9HGN4</accession>
<protein>
    <recommendedName>
        <fullName evidence="8">Linear element protein Mug20</fullName>
    </recommendedName>
    <alternativeName>
        <fullName>Meiotically up-regulated gene 20 protein</fullName>
    </alternativeName>
</protein>
<sequence>MSEIITSLQTELSNRHANMVSEAVLAFSEHHDSALHSYFLNARVKDVILESLRTTEEKLRALDKLQLDASKNLSNLLVEYNSINAELESVNSKISSISSQEYALEEFQALSQNFEKNLVQHRRNSQNKLKCAMEKLKMIETSTHKAILDNF</sequence>
<proteinExistence type="evidence at protein level"/>
<comment type="function">
    <text evidence="5">During meiotic DNA recombination, binds to and may help activate DNA double-strand break (DSB) hotspot sites.</text>
</comment>
<comment type="subunit">
    <text evidence="4 5">Component of linear elements (LinEs), which are similar to synaptonemal complexes, at least composed of rec27, rec25, rec10 and mug20 (PubMed:23395004). Interacts with rec10 (PubMed:19756689).</text>
</comment>
<comment type="subcellular location">
    <subcellularLocation>
        <location evidence="3">Cytoplasm</location>
    </subcellularLocation>
    <subcellularLocation>
        <location evidence="3 5 7">Nucleus</location>
    </subcellularLocation>
    <subcellularLocation>
        <location evidence="5">Chromosome</location>
    </subcellularLocation>
    <text evidence="5">Localizes to chromosomal double-strand break (DSB) hotspot sites during the meiotic cell cycle.</text>
</comment>
<comment type="developmental stage">
    <text evidence="2 5 7">Up-regulated during meiosis (PubMed:16303567). Present from pre-meiotic DNA replication and disappears following meiotic prophase I (PubMed:23395004, PubMed:33825974).</text>
</comment>
<comment type="disruption phenotype">
    <text evidence="5 7">Abnormal linear element formation (PubMed:23395004, PubMed:33825974). Decreases meiotic gene conversion at ade6 (PubMed:23395004). Decreases crossing-over between ade6 and arg1, and lys4 and his4 (PubMed:23395004). Abnormal sporulation (PubMed:33825974).</text>
</comment>
<gene>
    <name evidence="8" type="primary">mug20</name>
    <name evidence="8" type="ORF">SPBC36B7.06c</name>
</gene>
<dbReference type="EMBL" id="CU329671">
    <property type="protein sequence ID" value="CAC05727.2"/>
    <property type="molecule type" value="Genomic_DNA"/>
</dbReference>
<dbReference type="RefSeq" id="NP_595988.2">
    <property type="nucleotide sequence ID" value="NM_001021895.2"/>
</dbReference>
<dbReference type="SMR" id="Q9HGN4"/>
<dbReference type="BioGRID" id="277506">
    <property type="interactions" value="53"/>
</dbReference>
<dbReference type="STRING" id="284812.Q9HGN4"/>
<dbReference type="PaxDb" id="4896-SPBC36B7.06c.1"/>
<dbReference type="EnsemblFungi" id="SPBC36B7.06c.1">
    <property type="protein sequence ID" value="SPBC36B7.06c.1:pep"/>
    <property type="gene ID" value="SPBC36B7.06c"/>
</dbReference>
<dbReference type="GeneID" id="2540990"/>
<dbReference type="KEGG" id="spo:2540990"/>
<dbReference type="PomBase" id="SPBC36B7.06c">
    <property type="gene designation" value="mug20"/>
</dbReference>
<dbReference type="VEuPathDB" id="FungiDB:SPBC36B7.06c"/>
<dbReference type="HOGENOM" id="CLU_1732541_0_0_1"/>
<dbReference type="InParanoid" id="Q9HGN4"/>
<dbReference type="OMA" id="HDRVLQS"/>
<dbReference type="PRO" id="PR:Q9HGN4"/>
<dbReference type="Proteomes" id="UP000002485">
    <property type="component" value="Chromosome II"/>
</dbReference>
<dbReference type="GO" id="GO:0000785">
    <property type="term" value="C:chromatin"/>
    <property type="evidence" value="ECO:0000314"/>
    <property type="project" value="PomBase"/>
</dbReference>
<dbReference type="GO" id="GO:0005829">
    <property type="term" value="C:cytosol"/>
    <property type="evidence" value="ECO:0007005"/>
    <property type="project" value="PomBase"/>
</dbReference>
<dbReference type="GO" id="GO:0030998">
    <property type="term" value="C:linear element"/>
    <property type="evidence" value="ECO:0000314"/>
    <property type="project" value="PomBase"/>
</dbReference>
<dbReference type="GO" id="GO:0005634">
    <property type="term" value="C:nucleus"/>
    <property type="evidence" value="ECO:0007005"/>
    <property type="project" value="PomBase"/>
</dbReference>
<dbReference type="GO" id="GO:0010780">
    <property type="term" value="P:meiotic DNA double-strand break formation involved in reciprocal meiotic recombination"/>
    <property type="evidence" value="ECO:0000269"/>
    <property type="project" value="PomBase"/>
</dbReference>
<reference key="1">
    <citation type="journal article" date="2002" name="Nature">
        <title>The genome sequence of Schizosaccharomyces pombe.</title>
        <authorList>
            <person name="Wood V."/>
            <person name="Gwilliam R."/>
            <person name="Rajandream M.A."/>
            <person name="Lyne M.H."/>
            <person name="Lyne R."/>
            <person name="Stewart A."/>
            <person name="Sgouros J.G."/>
            <person name="Peat N."/>
            <person name="Hayles J."/>
            <person name="Baker S.G."/>
            <person name="Basham D."/>
            <person name="Bowman S."/>
            <person name="Brooks K."/>
            <person name="Brown D."/>
            <person name="Brown S."/>
            <person name="Chillingworth T."/>
            <person name="Churcher C.M."/>
            <person name="Collins M."/>
            <person name="Connor R."/>
            <person name="Cronin A."/>
            <person name="Davis P."/>
            <person name="Feltwell T."/>
            <person name="Fraser A."/>
            <person name="Gentles S."/>
            <person name="Goble A."/>
            <person name="Hamlin N."/>
            <person name="Harris D.E."/>
            <person name="Hidalgo J."/>
            <person name="Hodgson G."/>
            <person name="Holroyd S."/>
            <person name="Hornsby T."/>
            <person name="Howarth S."/>
            <person name="Huckle E.J."/>
            <person name="Hunt S."/>
            <person name="Jagels K."/>
            <person name="James K.D."/>
            <person name="Jones L."/>
            <person name="Jones M."/>
            <person name="Leather S."/>
            <person name="McDonald S."/>
            <person name="McLean J."/>
            <person name="Mooney P."/>
            <person name="Moule S."/>
            <person name="Mungall K.L."/>
            <person name="Murphy L.D."/>
            <person name="Niblett D."/>
            <person name="Odell C."/>
            <person name="Oliver K."/>
            <person name="O'Neil S."/>
            <person name="Pearson D."/>
            <person name="Quail M.A."/>
            <person name="Rabbinowitsch E."/>
            <person name="Rutherford K.M."/>
            <person name="Rutter S."/>
            <person name="Saunders D."/>
            <person name="Seeger K."/>
            <person name="Sharp S."/>
            <person name="Skelton J."/>
            <person name="Simmonds M.N."/>
            <person name="Squares R."/>
            <person name="Squares S."/>
            <person name="Stevens K."/>
            <person name="Taylor K."/>
            <person name="Taylor R.G."/>
            <person name="Tivey A."/>
            <person name="Walsh S.V."/>
            <person name="Warren T."/>
            <person name="Whitehead S."/>
            <person name="Woodward J.R."/>
            <person name="Volckaert G."/>
            <person name="Aert R."/>
            <person name="Robben J."/>
            <person name="Grymonprez B."/>
            <person name="Weltjens I."/>
            <person name="Vanstreels E."/>
            <person name="Rieger M."/>
            <person name="Schaefer M."/>
            <person name="Mueller-Auer S."/>
            <person name="Gabel C."/>
            <person name="Fuchs M."/>
            <person name="Duesterhoeft A."/>
            <person name="Fritzc C."/>
            <person name="Holzer E."/>
            <person name="Moestl D."/>
            <person name="Hilbert H."/>
            <person name="Borzym K."/>
            <person name="Langer I."/>
            <person name="Beck A."/>
            <person name="Lehrach H."/>
            <person name="Reinhardt R."/>
            <person name="Pohl T.M."/>
            <person name="Eger P."/>
            <person name="Zimmermann W."/>
            <person name="Wedler H."/>
            <person name="Wambutt R."/>
            <person name="Purnelle B."/>
            <person name="Goffeau A."/>
            <person name="Cadieu E."/>
            <person name="Dreano S."/>
            <person name="Gloux S."/>
            <person name="Lelaure V."/>
            <person name="Mottier S."/>
            <person name="Galibert F."/>
            <person name="Aves S.J."/>
            <person name="Xiang Z."/>
            <person name="Hunt C."/>
            <person name="Moore K."/>
            <person name="Hurst S.M."/>
            <person name="Lucas M."/>
            <person name="Rochet M."/>
            <person name="Gaillardin C."/>
            <person name="Tallada V.A."/>
            <person name="Garzon A."/>
            <person name="Thode G."/>
            <person name="Daga R.R."/>
            <person name="Cruzado L."/>
            <person name="Jimenez J."/>
            <person name="Sanchez M."/>
            <person name="del Rey F."/>
            <person name="Benito J."/>
            <person name="Dominguez A."/>
            <person name="Revuelta J.L."/>
            <person name="Moreno S."/>
            <person name="Armstrong J."/>
            <person name="Forsburg S.L."/>
            <person name="Cerutti L."/>
            <person name="Lowe T."/>
            <person name="McCombie W.R."/>
            <person name="Paulsen I."/>
            <person name="Potashkin J."/>
            <person name="Shpakovski G.V."/>
            <person name="Ussery D."/>
            <person name="Barrell B.G."/>
            <person name="Nurse P."/>
        </authorList>
    </citation>
    <scope>NUCLEOTIDE SEQUENCE [LARGE SCALE GENOMIC DNA]</scope>
    <source>
        <strain>972 / ATCC 24843</strain>
    </source>
</reference>
<reference key="2">
    <citation type="journal article" date="2011" name="Science">
        <title>Comparative functional genomics of the fission yeasts.</title>
        <authorList>
            <person name="Rhind N."/>
            <person name="Chen Z."/>
            <person name="Yassour M."/>
            <person name="Thompson D.A."/>
            <person name="Haas B.J."/>
            <person name="Habib N."/>
            <person name="Wapinski I."/>
            <person name="Roy S."/>
            <person name="Lin M.F."/>
            <person name="Heiman D.I."/>
            <person name="Young S.K."/>
            <person name="Furuya K."/>
            <person name="Guo Y."/>
            <person name="Pidoux A."/>
            <person name="Chen H.M."/>
            <person name="Robbertse B."/>
            <person name="Goldberg J.M."/>
            <person name="Aoki K."/>
            <person name="Bayne E.H."/>
            <person name="Berlin A.M."/>
            <person name="Desjardins C.A."/>
            <person name="Dobbs E."/>
            <person name="Dukaj L."/>
            <person name="Fan L."/>
            <person name="FitzGerald M.G."/>
            <person name="French C."/>
            <person name="Gujja S."/>
            <person name="Hansen K."/>
            <person name="Keifenheim D."/>
            <person name="Levin J.Z."/>
            <person name="Mosher R.A."/>
            <person name="Mueller C.A."/>
            <person name="Pfiffner J."/>
            <person name="Priest M."/>
            <person name="Russ C."/>
            <person name="Smialowska A."/>
            <person name="Swoboda P."/>
            <person name="Sykes S.M."/>
            <person name="Vaughn M."/>
            <person name="Vengrova S."/>
            <person name="Yoder R."/>
            <person name="Zeng Q."/>
            <person name="Allshire R."/>
            <person name="Baulcombe D."/>
            <person name="Birren B.W."/>
            <person name="Brown W."/>
            <person name="Ekwall K."/>
            <person name="Kellis M."/>
            <person name="Leatherwood J."/>
            <person name="Levin H."/>
            <person name="Margalit H."/>
            <person name="Martienssen R."/>
            <person name="Nieduszynski C.A."/>
            <person name="Spatafora J.W."/>
            <person name="Friedman N."/>
            <person name="Dalgaard J.Z."/>
            <person name="Baumann P."/>
            <person name="Niki H."/>
            <person name="Regev A."/>
            <person name="Nusbaum C."/>
        </authorList>
    </citation>
    <scope>REVISION OF GENE MODEL</scope>
</reference>
<reference key="3">
    <citation type="journal article" date="2005" name="Curr. Biol.">
        <title>A large-scale screen in S. pombe identifies seven novel genes required for critical meiotic events.</title>
        <authorList>
            <person name="Martin-Castellanos C."/>
            <person name="Blanco M."/>
            <person name="Rozalen A.E."/>
            <person name="Perez-Hidalgo L."/>
            <person name="Garcia A.I."/>
            <person name="Conde F."/>
            <person name="Mata J."/>
            <person name="Ellermeier C."/>
            <person name="Davis L."/>
            <person name="San-Segundo P."/>
            <person name="Smith G.R."/>
            <person name="Moreno S."/>
        </authorList>
    </citation>
    <scope>DEVELOPMENTAL STAGE</scope>
</reference>
<reference key="4">
    <citation type="journal article" date="2006" name="Nat. Biotechnol.">
        <title>ORFeome cloning and global analysis of protein localization in the fission yeast Schizosaccharomyces pombe.</title>
        <authorList>
            <person name="Matsuyama A."/>
            <person name="Arai R."/>
            <person name="Yashiroda Y."/>
            <person name="Shirai A."/>
            <person name="Kamata A."/>
            <person name="Sekido S."/>
            <person name="Kobayashi Y."/>
            <person name="Hashimoto A."/>
            <person name="Hamamoto M."/>
            <person name="Hiraoka Y."/>
            <person name="Horinouchi S."/>
            <person name="Yoshida M."/>
        </authorList>
    </citation>
    <scope>SUBCELLULAR LOCATION [LARGE SCALE ANALYSIS]</scope>
</reference>
<reference key="5">
    <citation type="journal article" date="2010" name="Chromosoma">
        <title>SUMOylation is required for normal development of linear elements and wild-type meiotic recombination in Schizosaccharomyces pombe.</title>
        <authorList>
            <person name="Spirek M."/>
            <person name="Estreicher A."/>
            <person name="Csaszar E."/>
            <person name="Wells J."/>
            <person name="McFarlane R.J."/>
            <person name="Watts F.Z."/>
            <person name="Loidl J."/>
        </authorList>
    </citation>
    <scope>IDENTIFICATION BY MASS SPECTROMETRY</scope>
    <scope>INTERACTION WITH REC10</scope>
</reference>
<reference key="6">
    <citation type="journal article" date="2013" name="Mol. Cell">
        <title>Protein determinants of meiotic DNA break hot spots.</title>
        <authorList>
            <person name="Fowler K.R."/>
            <person name="Gutierrez-Velasco S."/>
            <person name="Martin-Castellanos C."/>
            <person name="Smith G.R."/>
        </authorList>
    </citation>
    <scope>FUNCTION</scope>
    <scope>IDENTIFICATION IN THE LINEAR ELEMENT COMPLEX</scope>
    <scope>SUBCELLULAR LOCATION</scope>
    <scope>DEVELOPMENTAL STAGE</scope>
    <scope>DISRUPTION PHENOTYPE</scope>
</reference>
<reference key="7">
    <citation type="journal article" date="2017" name="Sci. Rep.">
        <title>Functional organization of protein determinants of meiotic DNA break hotspots.</title>
        <authorList>
            <person name="Ma L."/>
            <person name="Fowler K.R."/>
            <person name="Martin-Castellanos C."/>
            <person name="Smith G.R."/>
        </authorList>
    </citation>
    <scope>MUTAGENESIS OF LEU-52 AND VAL-78</scope>
</reference>
<reference key="8">
    <citation type="journal article" date="2021" name="Chromosoma">
        <title>Linear elements are stable structures along the chromosome axis in fission yeast meiosis.</title>
        <authorList>
            <person name="Ding D.Q."/>
            <person name="Matsuda A."/>
            <person name="Okamasa K."/>
            <person name="Hiraoka Y."/>
        </authorList>
    </citation>
    <scope>SUBCELLULAR LOCATION</scope>
    <scope>DEVELOPMENTAL STAGE</scope>
    <scope>DISRUPTION PHENOTYPE</scope>
</reference>
<organism>
    <name type="scientific">Schizosaccharomyces pombe (strain 972 / ATCC 24843)</name>
    <name type="common">Fission yeast</name>
    <dbReference type="NCBI Taxonomy" id="284812"/>
    <lineage>
        <taxon>Eukaryota</taxon>
        <taxon>Fungi</taxon>
        <taxon>Dikarya</taxon>
        <taxon>Ascomycota</taxon>
        <taxon>Taphrinomycotina</taxon>
        <taxon>Schizosaccharomycetes</taxon>
        <taxon>Schizosaccharomycetales</taxon>
        <taxon>Schizosaccharomycetaceae</taxon>
        <taxon>Schizosaccharomyces</taxon>
    </lineage>
</organism>
<feature type="chain" id="PRO_0000278495" description="Linear element protein Mug20">
    <location>
        <begin position="1"/>
        <end position="151"/>
    </location>
</feature>
<feature type="coiled-coil region" evidence="1">
    <location>
        <begin position="56"/>
        <end position="140"/>
    </location>
</feature>
<feature type="mutagenesis site" description="Decreases meiotic gene conversion at ade6, crossing-over between ade6 and arg1, and abolishes double-strand break (DSB) formation at a DSB hotspot." evidence="6">
    <original>L</original>
    <variation>P</variation>
    <location>
        <position position="52"/>
    </location>
</feature>
<feature type="mutagenesis site" description="Decreases meiotic gene conversion at ade6, crossing-over between ade6 and arg1, and double-strand break (DSB) formation at a DSB hotspot." evidence="6">
    <original>V</original>
    <variation>E</variation>
    <location>
        <position position="78"/>
    </location>
</feature>